<proteinExistence type="inferred from homology"/>
<dbReference type="EC" id="7.1.1.-" evidence="1"/>
<dbReference type="EMBL" id="CP000628">
    <property type="protein sequence ID" value="ACM26188.1"/>
    <property type="molecule type" value="Genomic_DNA"/>
</dbReference>
<dbReference type="RefSeq" id="WP_007689956.1">
    <property type="nucleotide sequence ID" value="NC_011985.1"/>
</dbReference>
<dbReference type="SMR" id="B9JD51"/>
<dbReference type="STRING" id="311403.Arad_1855"/>
<dbReference type="GeneID" id="86848070"/>
<dbReference type="KEGG" id="ara:Arad_1855"/>
<dbReference type="eggNOG" id="COG1005">
    <property type="taxonomic scope" value="Bacteria"/>
</dbReference>
<dbReference type="HOGENOM" id="CLU_015134_0_1_5"/>
<dbReference type="Proteomes" id="UP000001600">
    <property type="component" value="Chromosome 1"/>
</dbReference>
<dbReference type="GO" id="GO:0005886">
    <property type="term" value="C:plasma membrane"/>
    <property type="evidence" value="ECO:0007669"/>
    <property type="project" value="UniProtKB-SubCell"/>
</dbReference>
<dbReference type="GO" id="GO:0003954">
    <property type="term" value="F:NADH dehydrogenase activity"/>
    <property type="evidence" value="ECO:0007669"/>
    <property type="project" value="TreeGrafter"/>
</dbReference>
<dbReference type="GO" id="GO:0016655">
    <property type="term" value="F:oxidoreductase activity, acting on NAD(P)H, quinone or similar compound as acceptor"/>
    <property type="evidence" value="ECO:0007669"/>
    <property type="project" value="UniProtKB-UniRule"/>
</dbReference>
<dbReference type="GO" id="GO:0048038">
    <property type="term" value="F:quinone binding"/>
    <property type="evidence" value="ECO:0007669"/>
    <property type="project" value="UniProtKB-KW"/>
</dbReference>
<dbReference type="GO" id="GO:0009060">
    <property type="term" value="P:aerobic respiration"/>
    <property type="evidence" value="ECO:0007669"/>
    <property type="project" value="TreeGrafter"/>
</dbReference>
<dbReference type="HAMAP" id="MF_01350">
    <property type="entry name" value="NDH1_NuoH"/>
    <property type="match status" value="1"/>
</dbReference>
<dbReference type="InterPro" id="IPR001694">
    <property type="entry name" value="NADH_UbQ_OxRdtase_su1/FPO"/>
</dbReference>
<dbReference type="InterPro" id="IPR018086">
    <property type="entry name" value="NADH_UbQ_OxRdtase_su1_CS"/>
</dbReference>
<dbReference type="NCBIfam" id="NF004741">
    <property type="entry name" value="PRK06076.1-2"/>
    <property type="match status" value="1"/>
</dbReference>
<dbReference type="NCBIfam" id="NF004745">
    <property type="entry name" value="PRK06076.1-6"/>
    <property type="match status" value="1"/>
</dbReference>
<dbReference type="PANTHER" id="PTHR11432">
    <property type="entry name" value="NADH DEHYDROGENASE SUBUNIT 1"/>
    <property type="match status" value="1"/>
</dbReference>
<dbReference type="PANTHER" id="PTHR11432:SF3">
    <property type="entry name" value="NADH-UBIQUINONE OXIDOREDUCTASE CHAIN 1"/>
    <property type="match status" value="1"/>
</dbReference>
<dbReference type="Pfam" id="PF00146">
    <property type="entry name" value="NADHdh"/>
    <property type="match status" value="1"/>
</dbReference>
<dbReference type="PROSITE" id="PS00668">
    <property type="entry name" value="COMPLEX1_ND1_2"/>
    <property type="match status" value="1"/>
</dbReference>
<keyword id="KW-0997">Cell inner membrane</keyword>
<keyword id="KW-1003">Cell membrane</keyword>
<keyword id="KW-0472">Membrane</keyword>
<keyword id="KW-0520">NAD</keyword>
<keyword id="KW-0874">Quinone</keyword>
<keyword id="KW-1278">Translocase</keyword>
<keyword id="KW-0812">Transmembrane</keyword>
<keyword id="KW-1133">Transmembrane helix</keyword>
<keyword id="KW-0830">Ubiquinone</keyword>
<sequence length="347" mass="38383">MDSFVSTYLWPALIMIGQSLLLLVCLLVFIAYILLADRKIWAAVQLRRGPNVVGPFGLFQSFADLLKFMVKEPIIPAGANKAVFLLAPLVSVVLALSTWAVVPVANGWVIANINVGILYILAISSLEVYGIIMGGWASNSKYPFLGALRSAAQMVSYEVSIGLVIVTVLLCVGSLNLTDIVMSQQTGLGTKLGLPASFLDWHWLSLFPMFIVFFISALAETNRPPFDLPEAESELVAGFMVEYGSAPYMMFMLGEYAAVVLMCSLTTILFLGGWLPPVDIWILSWVPGIIWFMLKACFVFFMFAMVKAFVPRYRYDQLMRLGWKVFLPLSLAMVVIVAFVLKLTGWA</sequence>
<reference key="1">
    <citation type="journal article" date="2009" name="J. Bacteriol.">
        <title>Genome sequences of three Agrobacterium biovars help elucidate the evolution of multichromosome genomes in bacteria.</title>
        <authorList>
            <person name="Slater S.C."/>
            <person name="Goldman B.S."/>
            <person name="Goodner B."/>
            <person name="Setubal J.C."/>
            <person name="Farrand S.K."/>
            <person name="Nester E.W."/>
            <person name="Burr T.J."/>
            <person name="Banta L."/>
            <person name="Dickerman A.W."/>
            <person name="Paulsen I."/>
            <person name="Otten L."/>
            <person name="Suen G."/>
            <person name="Welch R."/>
            <person name="Almeida N.F."/>
            <person name="Arnold F."/>
            <person name="Burton O.T."/>
            <person name="Du Z."/>
            <person name="Ewing A."/>
            <person name="Godsy E."/>
            <person name="Heisel S."/>
            <person name="Houmiel K.L."/>
            <person name="Jhaveri J."/>
            <person name="Lu J."/>
            <person name="Miller N.M."/>
            <person name="Norton S."/>
            <person name="Chen Q."/>
            <person name="Phoolcharoen W."/>
            <person name="Ohlin V."/>
            <person name="Ondrusek D."/>
            <person name="Pride N."/>
            <person name="Stricklin S.L."/>
            <person name="Sun J."/>
            <person name="Wheeler C."/>
            <person name="Wilson L."/>
            <person name="Zhu H."/>
            <person name="Wood D.W."/>
        </authorList>
    </citation>
    <scope>NUCLEOTIDE SEQUENCE [LARGE SCALE GENOMIC DNA]</scope>
    <source>
        <strain>K84 / ATCC BAA-868</strain>
    </source>
</reference>
<organism>
    <name type="scientific">Rhizobium rhizogenes (strain K84 / ATCC BAA-868)</name>
    <name type="common">Agrobacterium radiobacter</name>
    <dbReference type="NCBI Taxonomy" id="311403"/>
    <lineage>
        <taxon>Bacteria</taxon>
        <taxon>Pseudomonadati</taxon>
        <taxon>Pseudomonadota</taxon>
        <taxon>Alphaproteobacteria</taxon>
        <taxon>Hyphomicrobiales</taxon>
        <taxon>Rhizobiaceae</taxon>
        <taxon>Rhizobium/Agrobacterium group</taxon>
        <taxon>Rhizobium</taxon>
    </lineage>
</organism>
<protein>
    <recommendedName>
        <fullName evidence="1">NADH-quinone oxidoreductase subunit H</fullName>
        <ecNumber evidence="1">7.1.1.-</ecNumber>
    </recommendedName>
    <alternativeName>
        <fullName evidence="1">NADH dehydrogenase I subunit H</fullName>
    </alternativeName>
    <alternativeName>
        <fullName evidence="1">NDH-1 subunit H</fullName>
    </alternativeName>
</protein>
<evidence type="ECO:0000255" key="1">
    <source>
        <dbReference type="HAMAP-Rule" id="MF_01350"/>
    </source>
</evidence>
<comment type="function">
    <text evidence="1">NDH-1 shuttles electrons from NADH, via FMN and iron-sulfur (Fe-S) centers, to quinones in the respiratory chain. The immediate electron acceptor for the enzyme in this species is believed to be ubiquinone. Couples the redox reaction to proton translocation (for every two electrons transferred, four hydrogen ions are translocated across the cytoplasmic membrane), and thus conserves the redox energy in a proton gradient. This subunit may bind ubiquinone.</text>
</comment>
<comment type="catalytic activity">
    <reaction evidence="1">
        <text>a quinone + NADH + 5 H(+)(in) = a quinol + NAD(+) + 4 H(+)(out)</text>
        <dbReference type="Rhea" id="RHEA:57888"/>
        <dbReference type="ChEBI" id="CHEBI:15378"/>
        <dbReference type="ChEBI" id="CHEBI:24646"/>
        <dbReference type="ChEBI" id="CHEBI:57540"/>
        <dbReference type="ChEBI" id="CHEBI:57945"/>
        <dbReference type="ChEBI" id="CHEBI:132124"/>
    </reaction>
</comment>
<comment type="subunit">
    <text evidence="1">NDH-1 is composed of 14 different subunits. Subunits NuoA, H, J, K, L, M, N constitute the membrane sector of the complex.</text>
</comment>
<comment type="subcellular location">
    <subcellularLocation>
        <location evidence="1">Cell inner membrane</location>
        <topology evidence="1">Multi-pass membrane protein</topology>
    </subcellularLocation>
</comment>
<comment type="similarity">
    <text evidence="1">Belongs to the complex I subunit 1 family.</text>
</comment>
<gene>
    <name evidence="1" type="primary">nuoH</name>
    <name type="ordered locus">Arad_1855</name>
</gene>
<feature type="chain" id="PRO_1000166615" description="NADH-quinone oxidoreductase subunit H">
    <location>
        <begin position="1"/>
        <end position="347"/>
    </location>
</feature>
<feature type="transmembrane region" description="Helical" evidence="1">
    <location>
        <begin position="13"/>
        <end position="33"/>
    </location>
</feature>
<feature type="transmembrane region" description="Helical" evidence="1">
    <location>
        <begin position="82"/>
        <end position="102"/>
    </location>
</feature>
<feature type="transmembrane region" description="Helical" evidence="1">
    <location>
        <begin position="115"/>
        <end position="135"/>
    </location>
</feature>
<feature type="transmembrane region" description="Helical" evidence="1">
    <location>
        <begin position="161"/>
        <end position="181"/>
    </location>
</feature>
<feature type="transmembrane region" description="Helical" evidence="1">
    <location>
        <begin position="198"/>
        <end position="218"/>
    </location>
</feature>
<feature type="transmembrane region" description="Helical" evidence="1">
    <location>
        <begin position="258"/>
        <end position="278"/>
    </location>
</feature>
<feature type="transmembrane region" description="Helical" evidence="1">
    <location>
        <begin position="286"/>
        <end position="306"/>
    </location>
</feature>
<feature type="transmembrane region" description="Helical" evidence="1">
    <location>
        <begin position="321"/>
        <end position="341"/>
    </location>
</feature>
<name>NUOH_RHIR8</name>
<accession>B9JD51</accession>